<protein>
    <recommendedName>
        <fullName evidence="2">ATP synthase subunit b</fullName>
    </recommendedName>
    <alternativeName>
        <fullName evidence="2">ATP synthase F(0) sector subunit b</fullName>
    </alternativeName>
    <alternativeName>
        <fullName evidence="2">ATPase subunit I</fullName>
    </alternativeName>
    <alternativeName>
        <fullName evidence="2">F-type ATPase subunit b</fullName>
        <shortName evidence="2">F-ATPase subunit b</shortName>
    </alternativeName>
</protein>
<keyword id="KW-0066">ATP synthesis</keyword>
<keyword id="KW-0997">Cell inner membrane</keyword>
<keyword id="KW-1003">Cell membrane</keyword>
<keyword id="KW-0138">CF(0)</keyword>
<keyword id="KW-0375">Hydrogen ion transport</keyword>
<keyword id="KW-0406">Ion transport</keyword>
<keyword id="KW-0472">Membrane</keyword>
<keyword id="KW-0812">Transmembrane</keyword>
<keyword id="KW-1133">Transmembrane helix</keyword>
<keyword id="KW-0813">Transport</keyword>
<dbReference type="EMBL" id="CP001097">
    <property type="protein sequence ID" value="ACD91508.1"/>
    <property type="molecule type" value="Genomic_DNA"/>
</dbReference>
<dbReference type="RefSeq" id="WP_012467372.1">
    <property type="nucleotide sequence ID" value="NC_010803.1"/>
</dbReference>
<dbReference type="SMR" id="B3EIJ6"/>
<dbReference type="STRING" id="290315.Clim_2489"/>
<dbReference type="KEGG" id="cli:Clim_2489"/>
<dbReference type="eggNOG" id="COG0711">
    <property type="taxonomic scope" value="Bacteria"/>
</dbReference>
<dbReference type="HOGENOM" id="CLU_079215_4_1_10"/>
<dbReference type="OrthoDB" id="9795289at2"/>
<dbReference type="Proteomes" id="UP000008841">
    <property type="component" value="Chromosome"/>
</dbReference>
<dbReference type="GO" id="GO:0005886">
    <property type="term" value="C:plasma membrane"/>
    <property type="evidence" value="ECO:0007669"/>
    <property type="project" value="UniProtKB-SubCell"/>
</dbReference>
<dbReference type="GO" id="GO:0045259">
    <property type="term" value="C:proton-transporting ATP synthase complex"/>
    <property type="evidence" value="ECO:0007669"/>
    <property type="project" value="UniProtKB-KW"/>
</dbReference>
<dbReference type="GO" id="GO:0046933">
    <property type="term" value="F:proton-transporting ATP synthase activity, rotational mechanism"/>
    <property type="evidence" value="ECO:0007669"/>
    <property type="project" value="UniProtKB-UniRule"/>
</dbReference>
<dbReference type="GO" id="GO:0046961">
    <property type="term" value="F:proton-transporting ATPase activity, rotational mechanism"/>
    <property type="evidence" value="ECO:0007669"/>
    <property type="project" value="TreeGrafter"/>
</dbReference>
<dbReference type="CDD" id="cd06503">
    <property type="entry name" value="ATP-synt_Fo_b"/>
    <property type="match status" value="1"/>
</dbReference>
<dbReference type="Gene3D" id="1.20.5.620">
    <property type="entry name" value="F1F0 ATP synthase subunit B, membrane domain"/>
    <property type="match status" value="1"/>
</dbReference>
<dbReference type="HAMAP" id="MF_01398">
    <property type="entry name" value="ATP_synth_b_bprime"/>
    <property type="match status" value="1"/>
</dbReference>
<dbReference type="InterPro" id="IPR028987">
    <property type="entry name" value="ATP_synth_B-like_membr_sf"/>
</dbReference>
<dbReference type="InterPro" id="IPR002146">
    <property type="entry name" value="ATP_synth_b/b'su_bac/chlpt"/>
</dbReference>
<dbReference type="InterPro" id="IPR005864">
    <property type="entry name" value="ATP_synth_F0_bsu_bac"/>
</dbReference>
<dbReference type="InterPro" id="IPR050059">
    <property type="entry name" value="ATP_synthase_B_chain"/>
</dbReference>
<dbReference type="NCBIfam" id="TIGR01144">
    <property type="entry name" value="ATP_synt_b"/>
    <property type="match status" value="1"/>
</dbReference>
<dbReference type="NCBIfam" id="NF011042">
    <property type="entry name" value="PRK14472.1"/>
    <property type="match status" value="1"/>
</dbReference>
<dbReference type="PANTHER" id="PTHR33445:SF1">
    <property type="entry name" value="ATP SYNTHASE SUBUNIT B"/>
    <property type="match status" value="1"/>
</dbReference>
<dbReference type="PANTHER" id="PTHR33445">
    <property type="entry name" value="ATP SYNTHASE SUBUNIT B', CHLOROPLASTIC"/>
    <property type="match status" value="1"/>
</dbReference>
<dbReference type="Pfam" id="PF00430">
    <property type="entry name" value="ATP-synt_B"/>
    <property type="match status" value="1"/>
</dbReference>
<dbReference type="SUPFAM" id="SSF81573">
    <property type="entry name" value="F1F0 ATP synthase subunit B, membrane domain"/>
    <property type="match status" value="1"/>
</dbReference>
<organism>
    <name type="scientific">Chlorobium limicola (strain DSM 245 / NBRC 103803 / 6330)</name>
    <dbReference type="NCBI Taxonomy" id="290315"/>
    <lineage>
        <taxon>Bacteria</taxon>
        <taxon>Pseudomonadati</taxon>
        <taxon>Chlorobiota</taxon>
        <taxon>Chlorobiia</taxon>
        <taxon>Chlorobiales</taxon>
        <taxon>Chlorobiaceae</taxon>
        <taxon>Chlorobium/Pelodictyon group</taxon>
        <taxon>Chlorobium</taxon>
    </lineage>
</organism>
<comment type="function">
    <text evidence="2">F(1)F(0) ATP synthase produces ATP from ADP in the presence of a proton or sodium gradient. F-type ATPases consist of two structural domains, F(1) containing the extramembraneous catalytic core and F(0) containing the membrane proton channel, linked together by a central stalk and a peripheral stalk. During catalysis, ATP synthesis in the catalytic domain of F(1) is coupled via a rotary mechanism of the central stalk subunits to proton translocation.</text>
</comment>
<comment type="function">
    <text evidence="2">Component of the F(0) channel, it forms part of the peripheral stalk, linking F(1) to F(0).</text>
</comment>
<comment type="subunit">
    <text evidence="1">F-type ATPases have 2 components, F(1) - the catalytic core - and F(0) - the membrane proton channel. F(1) has five subunits: alpha(3), beta(3), gamma(1), delta(1), epsilon(1). F(0) has four main subunits: a(1), b(2) and c(10-14). The alpha and beta chains form an alternating ring which encloses part of the gamma chain. F(1) is attached to F(0) by a central stalk formed by the gamma and epsilon chains, while a peripheral stalk is formed by the delta and b chains (By similarity).</text>
</comment>
<comment type="subcellular location">
    <subcellularLocation>
        <location evidence="2">Cell inner membrane</location>
        <topology evidence="2">Single-pass membrane protein</topology>
    </subcellularLocation>
</comment>
<comment type="similarity">
    <text evidence="2">Belongs to the ATPase B chain family.</text>
</comment>
<gene>
    <name evidence="2" type="primary">atpF</name>
    <name type="ordered locus">Clim_2489</name>
</gene>
<reference key="1">
    <citation type="submission" date="2008-05" db="EMBL/GenBank/DDBJ databases">
        <title>Complete sequence of Chlorobium limicola DSM 245.</title>
        <authorList>
            <consortium name="US DOE Joint Genome Institute"/>
            <person name="Lucas S."/>
            <person name="Copeland A."/>
            <person name="Lapidus A."/>
            <person name="Glavina del Rio T."/>
            <person name="Dalin E."/>
            <person name="Tice H."/>
            <person name="Bruce D."/>
            <person name="Goodwin L."/>
            <person name="Pitluck S."/>
            <person name="Schmutz J."/>
            <person name="Larimer F."/>
            <person name="Land M."/>
            <person name="Hauser L."/>
            <person name="Kyrpides N."/>
            <person name="Ovchinnikova G."/>
            <person name="Zhao F."/>
            <person name="Li T."/>
            <person name="Liu Z."/>
            <person name="Overmann J."/>
            <person name="Bryant D.A."/>
            <person name="Richardson P."/>
        </authorList>
    </citation>
    <scope>NUCLEOTIDE SEQUENCE [LARGE SCALE GENOMIC DNA]</scope>
    <source>
        <strain>DSM 245 / NBRC 103803 / 6330</strain>
    </source>
</reference>
<sequence length="175" mass="19585">MLTSGIILLSGGLLSPNPGLIFWTAVTFVIVLLILKQLAWGPIISALEEREKGIQSSIDRAYSAKDEAEAILRKNRDMLAKADLESERIIREGKEYGEKLRQEMAEKAQFEAKKMIASAKDEIEQEKRRALDVLRNEVADLAIMGAEKIIKSSLDADTQKKIVDSMIRDLASKRN</sequence>
<proteinExistence type="inferred from homology"/>
<name>ATPF_CHLL2</name>
<evidence type="ECO:0000250" key="1"/>
<evidence type="ECO:0000255" key="2">
    <source>
        <dbReference type="HAMAP-Rule" id="MF_01398"/>
    </source>
</evidence>
<accession>B3EIJ6</accession>
<feature type="chain" id="PRO_0000368409" description="ATP synthase subunit b">
    <location>
        <begin position="1"/>
        <end position="175"/>
    </location>
</feature>
<feature type="transmembrane region" description="Helical" evidence="2">
    <location>
        <begin position="20"/>
        <end position="40"/>
    </location>
</feature>